<gene>
    <name type="primary">tmx2</name>
    <name type="synonym">txndc14</name>
    <name type="ORF">TEgg063n24.1</name>
</gene>
<reference key="1">
    <citation type="submission" date="2006-10" db="EMBL/GenBank/DDBJ databases">
        <authorList>
            <consortium name="Sanger Xenopus tropicalis EST/cDNA project"/>
        </authorList>
    </citation>
    <scope>NUCLEOTIDE SEQUENCE [LARGE SCALE MRNA]</scope>
    <source>
        <tissue>Egg</tissue>
    </source>
</reference>
<reference key="2">
    <citation type="submission" date="2004-07" db="EMBL/GenBank/DDBJ databases">
        <authorList>
            <consortium name="NIH - Xenopus Gene Collection (XGC) project"/>
        </authorList>
    </citation>
    <scope>NUCLEOTIDE SEQUENCE [LARGE SCALE MRNA]</scope>
    <source>
        <tissue>Embryo</tissue>
    </source>
</reference>
<accession>Q6DFS0</accession>
<dbReference type="EMBL" id="CR761011">
    <property type="protein sequence ID" value="CAJ82149.1"/>
    <property type="molecule type" value="mRNA"/>
</dbReference>
<dbReference type="EMBL" id="BC076663">
    <property type="protein sequence ID" value="AAH76663.1"/>
    <property type="molecule type" value="mRNA"/>
</dbReference>
<dbReference type="RefSeq" id="NP_001005010.1">
    <property type="nucleotide sequence ID" value="NM_001005010.1"/>
</dbReference>
<dbReference type="SMR" id="Q6DFS0"/>
<dbReference type="FunCoup" id="Q6DFS0">
    <property type="interactions" value="1075"/>
</dbReference>
<dbReference type="STRING" id="8364.ENSXETP00000029606"/>
<dbReference type="PaxDb" id="8364-ENSXETP00000055702"/>
<dbReference type="DNASU" id="448502"/>
<dbReference type="GeneID" id="448502"/>
<dbReference type="KEGG" id="xtr:448502"/>
<dbReference type="AGR" id="Xenbase:XB-GENE-489478"/>
<dbReference type="CTD" id="51075"/>
<dbReference type="Xenbase" id="XB-GENE-489478">
    <property type="gene designation" value="tmx2"/>
</dbReference>
<dbReference type="eggNOG" id="KOG0914">
    <property type="taxonomic scope" value="Eukaryota"/>
</dbReference>
<dbReference type="HOGENOM" id="CLU_064868_0_0_1"/>
<dbReference type="InParanoid" id="Q6DFS0"/>
<dbReference type="OMA" id="VIMIRTR"/>
<dbReference type="OrthoDB" id="20229at2759"/>
<dbReference type="PhylomeDB" id="Q6DFS0"/>
<dbReference type="TreeFam" id="TF314606"/>
<dbReference type="Proteomes" id="UP000008143">
    <property type="component" value="Chromosome 7"/>
</dbReference>
<dbReference type="Bgee" id="ENSXETG00000026417">
    <property type="expression patterns" value="Expressed in egg cell and 16 other cell types or tissues"/>
</dbReference>
<dbReference type="GO" id="GO:0005789">
    <property type="term" value="C:endoplasmic reticulum membrane"/>
    <property type="evidence" value="ECO:0007669"/>
    <property type="project" value="UniProtKB-SubCell"/>
</dbReference>
<dbReference type="GO" id="GO:0044233">
    <property type="term" value="C:mitochondria-associated endoplasmic reticulum membrane contact site"/>
    <property type="evidence" value="ECO:0000250"/>
    <property type="project" value="UniProtKB"/>
</dbReference>
<dbReference type="GO" id="GO:0031966">
    <property type="term" value="C:mitochondrial membrane"/>
    <property type="evidence" value="ECO:0007669"/>
    <property type="project" value="UniProtKB-SubCell"/>
</dbReference>
<dbReference type="GO" id="GO:0015036">
    <property type="term" value="F:disulfide oxidoreductase activity"/>
    <property type="evidence" value="ECO:0000250"/>
    <property type="project" value="UniProtKB"/>
</dbReference>
<dbReference type="GO" id="GO:0007420">
    <property type="term" value="P:brain development"/>
    <property type="evidence" value="ECO:0000250"/>
    <property type="project" value="UniProtKB"/>
</dbReference>
<dbReference type="CDD" id="cd02962">
    <property type="entry name" value="TMX2"/>
    <property type="match status" value="1"/>
</dbReference>
<dbReference type="Gene3D" id="3.40.30.10">
    <property type="entry name" value="Glutaredoxin"/>
    <property type="match status" value="1"/>
</dbReference>
<dbReference type="InterPro" id="IPR036249">
    <property type="entry name" value="Thioredoxin-like_sf"/>
</dbReference>
<dbReference type="InterPro" id="IPR013766">
    <property type="entry name" value="Thioredoxin_domain"/>
</dbReference>
<dbReference type="InterPro" id="IPR039101">
    <property type="entry name" value="TMX2"/>
</dbReference>
<dbReference type="InterPro" id="IPR037463">
    <property type="entry name" value="TMX2_thioredoxin_dom"/>
</dbReference>
<dbReference type="PANTHER" id="PTHR15853">
    <property type="entry name" value="THIOREDOXIN-RELATED"/>
    <property type="match status" value="1"/>
</dbReference>
<dbReference type="PANTHER" id="PTHR15853:SF0">
    <property type="entry name" value="THIOREDOXIN-RELATED TRANSMEMBRANE PROTEIN 2"/>
    <property type="match status" value="1"/>
</dbReference>
<dbReference type="Pfam" id="PF00085">
    <property type="entry name" value="Thioredoxin"/>
    <property type="match status" value="1"/>
</dbReference>
<dbReference type="SUPFAM" id="SSF52833">
    <property type="entry name" value="Thioredoxin-like"/>
    <property type="match status" value="1"/>
</dbReference>
<dbReference type="PROSITE" id="PS51352">
    <property type="entry name" value="THIOREDOXIN_2"/>
    <property type="match status" value="1"/>
</dbReference>
<evidence type="ECO:0000250" key="1">
    <source>
        <dbReference type="UniProtKB" id="Q9Y320"/>
    </source>
</evidence>
<evidence type="ECO:0000255" key="2"/>
<evidence type="ECO:0000255" key="3">
    <source>
        <dbReference type="PROSITE-ProRule" id="PRU00691"/>
    </source>
</evidence>
<evidence type="ECO:0000305" key="4"/>
<protein>
    <recommendedName>
        <fullName>Thioredoxin-related transmembrane protein 2</fullName>
    </recommendedName>
    <alternativeName>
        <fullName>Thioredoxin domain-containing protein 14</fullName>
    </alternativeName>
</protein>
<sequence length="287" mass="33250">MAVLAPLLAFLYAVPGLLRWVSQPYYLLSALLSVSFLLVRKVPPVCSVLPTQREDGNPCDFDWREVEILMFLSAIVMMKNRRSITVEQHIGNIFMFSKVANTILFFRLDLRMGLLYITLCIVFLMTCKPPLYLGPEHIKYFSDKTLEEELQSDGRVSWIIEFFANWSSECQSFAPIYAELSLKYNCAGLKFGKVDIGRYPEVSSRYSISPSPLSKQLPTLILFQGGREIFRRPQVDKKGRAVSWSFTQENVIREFNLNELYQKAKKIRKHQEDTINENEYNDSKKDQ</sequence>
<feature type="signal peptide" evidence="2">
    <location>
        <begin position="1"/>
        <end position="35"/>
    </location>
</feature>
<feature type="chain" id="PRO_0000315759" description="Thioredoxin-related transmembrane protein 2">
    <location>
        <begin position="36"/>
        <end position="287"/>
    </location>
</feature>
<feature type="topological domain" description="Extracellular" evidence="2">
    <location>
        <begin position="36"/>
        <end position="112"/>
    </location>
</feature>
<feature type="transmembrane region" description="Helical" evidence="2">
    <location>
        <begin position="113"/>
        <end position="133"/>
    </location>
</feature>
<feature type="topological domain" description="Cytoplasmic" evidence="2">
    <location>
        <begin position="134"/>
        <end position="287"/>
    </location>
</feature>
<feature type="domain" description="Thioredoxin" evidence="3">
    <location>
        <begin position="135"/>
        <end position="269"/>
    </location>
</feature>
<feature type="short sequence motif" description="Di-lysine motif" evidence="4">
    <location>
        <begin position="284"/>
        <end position="287"/>
    </location>
</feature>
<comment type="function">
    <text evidence="1">Endoplasmic reticulum and mitochondria-associated protein that probably functions as a regulator of cellular redox state and thereby regulates protein post-translational modification, protein folding and mitochondrial activity.</text>
</comment>
<comment type="subunit">
    <text evidence="1">Monomer (By similarity). Homodimer; disulfide-linked (By similarity). Occurs in both reduced and oxidized monomeric form (By similarity). Oxidative conditions increase homodimerization (By similarity).</text>
</comment>
<comment type="subcellular location">
    <subcellularLocation>
        <location evidence="1">Endoplasmic reticulum membrane</location>
        <topology evidence="2">Single-pass type I membrane protein</topology>
    </subcellularLocation>
    <subcellularLocation>
        <location evidence="1">Mitochondrion membrane</location>
        <topology evidence="2">Single-pass type I membrane protein</topology>
    </subcellularLocation>
    <text evidence="1">Localizes to endoplasmic reticulum mitochondria-associated membrane (MAMs) that connect the endoplasmic reticulum and the mitochondria.</text>
</comment>
<comment type="domain">
    <text evidence="4">The thioredoxin domain lacks the 2 redox-active cysteines, suggesting that it lacks thioredoxin activity.</text>
</comment>
<comment type="domain">
    <text evidence="4">The di-lysine motif confers endoplasmic reticulum localization for type I membrane proteins.</text>
</comment>
<proteinExistence type="evidence at transcript level"/>
<keyword id="KW-1015">Disulfide bond</keyword>
<keyword id="KW-0256">Endoplasmic reticulum</keyword>
<keyword id="KW-0472">Membrane</keyword>
<keyword id="KW-0496">Mitochondrion</keyword>
<keyword id="KW-1185">Reference proteome</keyword>
<keyword id="KW-0732">Signal</keyword>
<keyword id="KW-0812">Transmembrane</keyword>
<keyword id="KW-1133">Transmembrane helix</keyword>
<name>TMX2_XENTR</name>
<organism>
    <name type="scientific">Xenopus tropicalis</name>
    <name type="common">Western clawed frog</name>
    <name type="synonym">Silurana tropicalis</name>
    <dbReference type="NCBI Taxonomy" id="8364"/>
    <lineage>
        <taxon>Eukaryota</taxon>
        <taxon>Metazoa</taxon>
        <taxon>Chordata</taxon>
        <taxon>Craniata</taxon>
        <taxon>Vertebrata</taxon>
        <taxon>Euteleostomi</taxon>
        <taxon>Amphibia</taxon>
        <taxon>Batrachia</taxon>
        <taxon>Anura</taxon>
        <taxon>Pipoidea</taxon>
        <taxon>Pipidae</taxon>
        <taxon>Xenopodinae</taxon>
        <taxon>Xenopus</taxon>
        <taxon>Silurana</taxon>
    </lineage>
</organism>